<evidence type="ECO:0000255" key="1">
    <source>
        <dbReference type="HAMAP-Rule" id="MF_01013"/>
    </source>
</evidence>
<keyword id="KW-0028">Amino-acid biosynthesis</keyword>
<keyword id="KW-0963">Cytoplasm</keyword>
<keyword id="KW-0368">Histidine biosynthesis</keyword>
<keyword id="KW-0456">Lyase</keyword>
<accession>A4T9N2</accession>
<gene>
    <name evidence="1" type="primary">hisF</name>
    <name type="ordered locus">Mflv_3607</name>
</gene>
<protein>
    <recommendedName>
        <fullName evidence="1">Imidazole glycerol phosphate synthase subunit HisF</fullName>
        <ecNumber evidence="1">4.3.2.10</ecNumber>
    </recommendedName>
    <alternativeName>
        <fullName evidence="1">IGP synthase cyclase subunit</fullName>
    </alternativeName>
    <alternativeName>
        <fullName evidence="1">IGP synthase subunit HisF</fullName>
    </alternativeName>
    <alternativeName>
        <fullName evidence="1">ImGP synthase subunit HisF</fullName>
        <shortName evidence="1">IGPS subunit HisF</shortName>
    </alternativeName>
</protein>
<feature type="chain" id="PRO_1000084066" description="Imidazole glycerol phosphate synthase subunit HisF">
    <location>
        <begin position="1"/>
        <end position="261"/>
    </location>
</feature>
<feature type="active site" evidence="1">
    <location>
        <position position="16"/>
    </location>
</feature>
<feature type="active site" evidence="1">
    <location>
        <position position="135"/>
    </location>
</feature>
<organism>
    <name type="scientific">Mycolicibacterium gilvum (strain PYR-GCK)</name>
    <name type="common">Mycobacterium gilvum (strain PYR-GCK)</name>
    <dbReference type="NCBI Taxonomy" id="350054"/>
    <lineage>
        <taxon>Bacteria</taxon>
        <taxon>Bacillati</taxon>
        <taxon>Actinomycetota</taxon>
        <taxon>Actinomycetes</taxon>
        <taxon>Mycobacteriales</taxon>
        <taxon>Mycobacteriaceae</taxon>
        <taxon>Mycolicibacterium</taxon>
    </lineage>
</organism>
<dbReference type="EC" id="4.3.2.10" evidence="1"/>
<dbReference type="EMBL" id="CP000656">
    <property type="protein sequence ID" value="ABP46081.1"/>
    <property type="molecule type" value="Genomic_DNA"/>
</dbReference>
<dbReference type="SMR" id="A4T9N2"/>
<dbReference type="STRING" id="350054.Mflv_3607"/>
<dbReference type="KEGG" id="mgi:Mflv_3607"/>
<dbReference type="eggNOG" id="COG0107">
    <property type="taxonomic scope" value="Bacteria"/>
</dbReference>
<dbReference type="HOGENOM" id="CLU_048577_4_0_11"/>
<dbReference type="OrthoDB" id="9781903at2"/>
<dbReference type="UniPathway" id="UPA00031">
    <property type="reaction ID" value="UER00010"/>
</dbReference>
<dbReference type="GO" id="GO:0005737">
    <property type="term" value="C:cytoplasm"/>
    <property type="evidence" value="ECO:0007669"/>
    <property type="project" value="UniProtKB-SubCell"/>
</dbReference>
<dbReference type="GO" id="GO:0000107">
    <property type="term" value="F:imidazoleglycerol-phosphate synthase activity"/>
    <property type="evidence" value="ECO:0007669"/>
    <property type="project" value="UniProtKB-UniRule"/>
</dbReference>
<dbReference type="GO" id="GO:0016829">
    <property type="term" value="F:lyase activity"/>
    <property type="evidence" value="ECO:0007669"/>
    <property type="project" value="UniProtKB-KW"/>
</dbReference>
<dbReference type="GO" id="GO:0000105">
    <property type="term" value="P:L-histidine biosynthetic process"/>
    <property type="evidence" value="ECO:0007669"/>
    <property type="project" value="UniProtKB-UniRule"/>
</dbReference>
<dbReference type="CDD" id="cd04731">
    <property type="entry name" value="HisF"/>
    <property type="match status" value="1"/>
</dbReference>
<dbReference type="FunFam" id="3.20.20.70:FF:000006">
    <property type="entry name" value="Imidazole glycerol phosphate synthase subunit HisF"/>
    <property type="match status" value="1"/>
</dbReference>
<dbReference type="Gene3D" id="3.20.20.70">
    <property type="entry name" value="Aldolase class I"/>
    <property type="match status" value="1"/>
</dbReference>
<dbReference type="HAMAP" id="MF_01013">
    <property type="entry name" value="HisF"/>
    <property type="match status" value="1"/>
</dbReference>
<dbReference type="InterPro" id="IPR013785">
    <property type="entry name" value="Aldolase_TIM"/>
</dbReference>
<dbReference type="InterPro" id="IPR006062">
    <property type="entry name" value="His_biosynth"/>
</dbReference>
<dbReference type="InterPro" id="IPR004651">
    <property type="entry name" value="HisF"/>
</dbReference>
<dbReference type="InterPro" id="IPR050064">
    <property type="entry name" value="IGPS_HisA/HisF"/>
</dbReference>
<dbReference type="InterPro" id="IPR011060">
    <property type="entry name" value="RibuloseP-bd_barrel"/>
</dbReference>
<dbReference type="NCBIfam" id="TIGR00735">
    <property type="entry name" value="hisF"/>
    <property type="match status" value="1"/>
</dbReference>
<dbReference type="PANTHER" id="PTHR21235:SF2">
    <property type="entry name" value="IMIDAZOLE GLYCEROL PHOSPHATE SYNTHASE HISHF"/>
    <property type="match status" value="1"/>
</dbReference>
<dbReference type="PANTHER" id="PTHR21235">
    <property type="entry name" value="IMIDAZOLE GLYCEROL PHOSPHATE SYNTHASE SUBUNIT HISF/H IGP SYNTHASE SUBUNIT HISF/H"/>
    <property type="match status" value="1"/>
</dbReference>
<dbReference type="Pfam" id="PF00977">
    <property type="entry name" value="His_biosynth"/>
    <property type="match status" value="1"/>
</dbReference>
<dbReference type="SUPFAM" id="SSF51366">
    <property type="entry name" value="Ribulose-phoshate binding barrel"/>
    <property type="match status" value="1"/>
</dbReference>
<name>HIS6_MYCGI</name>
<proteinExistence type="inferred from homology"/>
<comment type="function">
    <text evidence="1">IGPS catalyzes the conversion of PRFAR and glutamine to IGP, AICAR and glutamate. The HisF subunit catalyzes the cyclization activity that produces IGP and AICAR from PRFAR using the ammonia provided by the HisH subunit.</text>
</comment>
<comment type="catalytic activity">
    <reaction evidence="1">
        <text>5-[(5-phospho-1-deoxy-D-ribulos-1-ylimino)methylamino]-1-(5-phospho-beta-D-ribosyl)imidazole-4-carboxamide + L-glutamine = D-erythro-1-(imidazol-4-yl)glycerol 3-phosphate + 5-amino-1-(5-phospho-beta-D-ribosyl)imidazole-4-carboxamide + L-glutamate + H(+)</text>
        <dbReference type="Rhea" id="RHEA:24793"/>
        <dbReference type="ChEBI" id="CHEBI:15378"/>
        <dbReference type="ChEBI" id="CHEBI:29985"/>
        <dbReference type="ChEBI" id="CHEBI:58278"/>
        <dbReference type="ChEBI" id="CHEBI:58359"/>
        <dbReference type="ChEBI" id="CHEBI:58475"/>
        <dbReference type="ChEBI" id="CHEBI:58525"/>
        <dbReference type="EC" id="4.3.2.10"/>
    </reaction>
</comment>
<comment type="pathway">
    <text evidence="1">Amino-acid biosynthesis; L-histidine biosynthesis; L-histidine from 5-phospho-alpha-D-ribose 1-diphosphate: step 5/9.</text>
</comment>
<comment type="subunit">
    <text evidence="1">Heterodimer of HisH and HisF.</text>
</comment>
<comment type="subcellular location">
    <subcellularLocation>
        <location evidence="1">Cytoplasm</location>
    </subcellularLocation>
</comment>
<comment type="similarity">
    <text evidence="1">Belongs to the HisA/HisF family.</text>
</comment>
<sequence length="261" mass="26818">MKPASDVATRVIPCLDVDDGRVVKGVNFANLRDAGDPVELAAAYDAEGADELTFLDVTASSSGRSTMLEVVRRTAEQVFIPLTVGGGVRSIADVDVLLRAGADKVSVNTAAIARPELLAELSRQFGSQCIVLSVDARTVPEGSTPTTSGWEVTTHGGRRGTGIDAVEWASQGAELGVGEILLNSMDADGTKAGFDLKMLRAVRGAVTVPVIASGGAGAVEHFAPAVFAGADAVLAASVFHFGDLTIGEVKAAMKAEGIVVR</sequence>
<reference key="1">
    <citation type="submission" date="2007-04" db="EMBL/GenBank/DDBJ databases">
        <title>Complete sequence of chromosome of Mycobacterium gilvum PYR-GCK.</title>
        <authorList>
            <consortium name="US DOE Joint Genome Institute"/>
            <person name="Copeland A."/>
            <person name="Lucas S."/>
            <person name="Lapidus A."/>
            <person name="Barry K."/>
            <person name="Detter J.C."/>
            <person name="Glavina del Rio T."/>
            <person name="Hammon N."/>
            <person name="Israni S."/>
            <person name="Dalin E."/>
            <person name="Tice H."/>
            <person name="Pitluck S."/>
            <person name="Chain P."/>
            <person name="Malfatti S."/>
            <person name="Shin M."/>
            <person name="Vergez L."/>
            <person name="Schmutz J."/>
            <person name="Larimer F."/>
            <person name="Land M."/>
            <person name="Hauser L."/>
            <person name="Kyrpides N."/>
            <person name="Mikhailova N."/>
            <person name="Miller C."/>
            <person name="Richardson P."/>
        </authorList>
    </citation>
    <scope>NUCLEOTIDE SEQUENCE [LARGE SCALE GENOMIC DNA]</scope>
    <source>
        <strain>PYR-GCK</strain>
    </source>
</reference>